<name>DNAA_LACDA</name>
<evidence type="ECO:0000255" key="1">
    <source>
        <dbReference type="HAMAP-Rule" id="MF_00377"/>
    </source>
</evidence>
<evidence type="ECO:0000256" key="2">
    <source>
        <dbReference type="SAM" id="MobiDB-lite"/>
    </source>
</evidence>
<organism>
    <name type="scientific">Lactobacillus delbrueckii subsp. bulgaricus (strain ATCC 11842 / DSM 20081 / BCRC 10696 / JCM 1002 / NBRC 13953 / NCIMB 11778 / NCTC 12712 / WDCM 00102 / Lb 14)</name>
    <dbReference type="NCBI Taxonomy" id="390333"/>
    <lineage>
        <taxon>Bacteria</taxon>
        <taxon>Bacillati</taxon>
        <taxon>Bacillota</taxon>
        <taxon>Bacilli</taxon>
        <taxon>Lactobacillales</taxon>
        <taxon>Lactobacillaceae</taxon>
        <taxon>Lactobacillus</taxon>
    </lineage>
</organism>
<dbReference type="EMBL" id="CR954253">
    <property type="protein sequence ID" value="CAI96847.1"/>
    <property type="molecule type" value="Genomic_DNA"/>
</dbReference>
<dbReference type="RefSeq" id="WP_003622141.1">
    <property type="nucleotide sequence ID" value="NZ_JQAV01000011.1"/>
</dbReference>
<dbReference type="SMR" id="Q1GC43"/>
<dbReference type="STRING" id="390333.Ldb0001"/>
<dbReference type="KEGG" id="ldb:Ldb0001"/>
<dbReference type="PATRIC" id="fig|390333.13.peg.529"/>
<dbReference type="eggNOG" id="COG0593">
    <property type="taxonomic scope" value="Bacteria"/>
</dbReference>
<dbReference type="HOGENOM" id="CLU_026910_3_1_9"/>
<dbReference type="BioCyc" id="LDEL390333:LDB_RS00005-MONOMER"/>
<dbReference type="Proteomes" id="UP000001259">
    <property type="component" value="Chromosome"/>
</dbReference>
<dbReference type="GO" id="GO:0005737">
    <property type="term" value="C:cytoplasm"/>
    <property type="evidence" value="ECO:0007669"/>
    <property type="project" value="UniProtKB-SubCell"/>
</dbReference>
<dbReference type="GO" id="GO:0005886">
    <property type="term" value="C:plasma membrane"/>
    <property type="evidence" value="ECO:0007669"/>
    <property type="project" value="TreeGrafter"/>
</dbReference>
<dbReference type="GO" id="GO:0005524">
    <property type="term" value="F:ATP binding"/>
    <property type="evidence" value="ECO:0007669"/>
    <property type="project" value="UniProtKB-UniRule"/>
</dbReference>
<dbReference type="GO" id="GO:0016887">
    <property type="term" value="F:ATP hydrolysis activity"/>
    <property type="evidence" value="ECO:0007669"/>
    <property type="project" value="InterPro"/>
</dbReference>
<dbReference type="GO" id="GO:0003688">
    <property type="term" value="F:DNA replication origin binding"/>
    <property type="evidence" value="ECO:0007669"/>
    <property type="project" value="UniProtKB-UniRule"/>
</dbReference>
<dbReference type="GO" id="GO:0008289">
    <property type="term" value="F:lipid binding"/>
    <property type="evidence" value="ECO:0007669"/>
    <property type="project" value="UniProtKB-KW"/>
</dbReference>
<dbReference type="GO" id="GO:0006270">
    <property type="term" value="P:DNA replication initiation"/>
    <property type="evidence" value="ECO:0007669"/>
    <property type="project" value="UniProtKB-UniRule"/>
</dbReference>
<dbReference type="GO" id="GO:0006275">
    <property type="term" value="P:regulation of DNA replication"/>
    <property type="evidence" value="ECO:0007669"/>
    <property type="project" value="UniProtKB-UniRule"/>
</dbReference>
<dbReference type="CDD" id="cd00009">
    <property type="entry name" value="AAA"/>
    <property type="match status" value="1"/>
</dbReference>
<dbReference type="CDD" id="cd06571">
    <property type="entry name" value="Bac_DnaA_C"/>
    <property type="match status" value="1"/>
</dbReference>
<dbReference type="FunFam" id="1.10.1750.10:FF:000002">
    <property type="entry name" value="Chromosomal replication initiator protein DnaA"/>
    <property type="match status" value="1"/>
</dbReference>
<dbReference type="FunFam" id="3.40.50.300:FF:000668">
    <property type="entry name" value="Chromosomal replication initiator protein DnaA"/>
    <property type="match status" value="1"/>
</dbReference>
<dbReference type="Gene3D" id="1.10.1750.10">
    <property type="match status" value="1"/>
</dbReference>
<dbReference type="Gene3D" id="1.10.8.60">
    <property type="match status" value="1"/>
</dbReference>
<dbReference type="Gene3D" id="3.30.300.180">
    <property type="match status" value="1"/>
</dbReference>
<dbReference type="Gene3D" id="3.40.50.300">
    <property type="entry name" value="P-loop containing nucleotide triphosphate hydrolases"/>
    <property type="match status" value="1"/>
</dbReference>
<dbReference type="HAMAP" id="MF_00377">
    <property type="entry name" value="DnaA_bact"/>
    <property type="match status" value="1"/>
</dbReference>
<dbReference type="InterPro" id="IPR003593">
    <property type="entry name" value="AAA+_ATPase"/>
</dbReference>
<dbReference type="InterPro" id="IPR001957">
    <property type="entry name" value="Chromosome_initiator_DnaA"/>
</dbReference>
<dbReference type="InterPro" id="IPR020591">
    <property type="entry name" value="Chromosome_initiator_DnaA-like"/>
</dbReference>
<dbReference type="InterPro" id="IPR018312">
    <property type="entry name" value="Chromosome_initiator_DnaA_CS"/>
</dbReference>
<dbReference type="InterPro" id="IPR013159">
    <property type="entry name" value="DnaA_C"/>
</dbReference>
<dbReference type="InterPro" id="IPR013317">
    <property type="entry name" value="DnaA_dom"/>
</dbReference>
<dbReference type="InterPro" id="IPR024633">
    <property type="entry name" value="DnaA_N_dom"/>
</dbReference>
<dbReference type="InterPro" id="IPR038454">
    <property type="entry name" value="DnaA_N_sf"/>
</dbReference>
<dbReference type="InterPro" id="IPR027417">
    <property type="entry name" value="P-loop_NTPase"/>
</dbReference>
<dbReference type="InterPro" id="IPR010921">
    <property type="entry name" value="Trp_repressor/repl_initiator"/>
</dbReference>
<dbReference type="NCBIfam" id="TIGR00362">
    <property type="entry name" value="DnaA"/>
    <property type="match status" value="1"/>
</dbReference>
<dbReference type="PANTHER" id="PTHR30050">
    <property type="entry name" value="CHROMOSOMAL REPLICATION INITIATOR PROTEIN DNAA"/>
    <property type="match status" value="1"/>
</dbReference>
<dbReference type="PANTHER" id="PTHR30050:SF2">
    <property type="entry name" value="CHROMOSOMAL REPLICATION INITIATOR PROTEIN DNAA"/>
    <property type="match status" value="1"/>
</dbReference>
<dbReference type="Pfam" id="PF00308">
    <property type="entry name" value="Bac_DnaA"/>
    <property type="match status" value="1"/>
</dbReference>
<dbReference type="Pfam" id="PF08299">
    <property type="entry name" value="Bac_DnaA_C"/>
    <property type="match status" value="1"/>
</dbReference>
<dbReference type="Pfam" id="PF11638">
    <property type="entry name" value="DnaA_N"/>
    <property type="match status" value="1"/>
</dbReference>
<dbReference type="PRINTS" id="PR00051">
    <property type="entry name" value="DNAA"/>
</dbReference>
<dbReference type="SMART" id="SM00382">
    <property type="entry name" value="AAA"/>
    <property type="match status" value="1"/>
</dbReference>
<dbReference type="SMART" id="SM00760">
    <property type="entry name" value="Bac_DnaA_C"/>
    <property type="match status" value="1"/>
</dbReference>
<dbReference type="SUPFAM" id="SSF52540">
    <property type="entry name" value="P-loop containing nucleoside triphosphate hydrolases"/>
    <property type="match status" value="1"/>
</dbReference>
<dbReference type="SUPFAM" id="SSF48295">
    <property type="entry name" value="TrpR-like"/>
    <property type="match status" value="1"/>
</dbReference>
<dbReference type="PROSITE" id="PS01008">
    <property type="entry name" value="DNAA"/>
    <property type="match status" value="1"/>
</dbReference>
<feature type="chain" id="PRO_1000048661" description="Chromosomal replication initiator protein DnaA">
    <location>
        <begin position="1"/>
        <end position="454"/>
    </location>
</feature>
<feature type="region of interest" description="Domain I, interacts with DnaA modulators" evidence="1">
    <location>
        <begin position="1"/>
        <end position="74"/>
    </location>
</feature>
<feature type="region of interest" description="Domain II" evidence="1">
    <location>
        <begin position="74"/>
        <end position="116"/>
    </location>
</feature>
<feature type="region of interest" description="Disordered" evidence="2">
    <location>
        <begin position="88"/>
        <end position="112"/>
    </location>
</feature>
<feature type="region of interest" description="Domain III, AAA+ region" evidence="1">
    <location>
        <begin position="117"/>
        <end position="333"/>
    </location>
</feature>
<feature type="region of interest" description="Domain IV, binds dsDNA" evidence="1">
    <location>
        <begin position="334"/>
        <end position="454"/>
    </location>
</feature>
<feature type="compositionally biased region" description="Basic and acidic residues" evidence="2">
    <location>
        <begin position="101"/>
        <end position="112"/>
    </location>
</feature>
<feature type="binding site" evidence="1">
    <location>
        <position position="161"/>
    </location>
    <ligand>
        <name>ATP</name>
        <dbReference type="ChEBI" id="CHEBI:30616"/>
    </ligand>
</feature>
<feature type="binding site" evidence="1">
    <location>
        <position position="163"/>
    </location>
    <ligand>
        <name>ATP</name>
        <dbReference type="ChEBI" id="CHEBI:30616"/>
    </ligand>
</feature>
<feature type="binding site" evidence="1">
    <location>
        <position position="164"/>
    </location>
    <ligand>
        <name>ATP</name>
        <dbReference type="ChEBI" id="CHEBI:30616"/>
    </ligand>
</feature>
<feature type="binding site" evidence="1">
    <location>
        <position position="165"/>
    </location>
    <ligand>
        <name>ATP</name>
        <dbReference type="ChEBI" id="CHEBI:30616"/>
    </ligand>
</feature>
<gene>
    <name evidence="1" type="primary">dnaA</name>
    <name type="ordered locus">Ldb0001</name>
</gene>
<keyword id="KW-0067">ATP-binding</keyword>
<keyword id="KW-0963">Cytoplasm</keyword>
<keyword id="KW-0235">DNA replication</keyword>
<keyword id="KW-0238">DNA-binding</keyword>
<keyword id="KW-0446">Lipid-binding</keyword>
<keyword id="KW-0547">Nucleotide-binding</keyword>
<keyword id="KW-1185">Reference proteome</keyword>
<sequence>MFDLEKFWDSFNAEMRSEFNEVSYNAWFKNTKPVSFNKDTHELVISVQTPVAKGYWEQNISANLIQSAYAYAGIDIYPVFVVKNGPTPSSERMLEPQPQAKPEKARPQGREFTKDLRLNEKYTFENFIQGEGNKLAAGAALAVADNPGTFYNPLFIFGGVGLGKTHLMQAIGHQMLAERPDAKVVYIQSETFVNDFINSIKNKTQDKFREKYRTADLLLVDDIQFFAKKEGIQEEFFHTFETLYNDQKQIVMTSDRLPTEIPDLSERLVSRFAWGLQVEITPPDLETRIAILRKKAESEGLEIDESTLDYVASQVDTNIRELEGALVKVQAQATIQKQDINIGLARSALADLKLVQKSRGLQISKIQEVVANYFQTSVPDLKGKKRVRQIVIPRQIAMYLSRELTDASLPKIGQEFGGKDHTTVMHACDKIARQIKTDTEIKSAVSDLRQMLER</sequence>
<proteinExistence type="inferred from homology"/>
<protein>
    <recommendedName>
        <fullName evidence="1">Chromosomal replication initiator protein DnaA</fullName>
    </recommendedName>
</protein>
<reference key="1">
    <citation type="journal article" date="2006" name="Proc. Natl. Acad. Sci. U.S.A.">
        <title>The complete genome sequence of Lactobacillus bulgaricus reveals extensive and ongoing reductive evolution.</title>
        <authorList>
            <person name="van de Guchte M."/>
            <person name="Penaud S."/>
            <person name="Grimaldi C."/>
            <person name="Barbe V."/>
            <person name="Bryson K."/>
            <person name="Nicolas P."/>
            <person name="Robert C."/>
            <person name="Oztas S."/>
            <person name="Mangenot S."/>
            <person name="Couloux A."/>
            <person name="Loux V."/>
            <person name="Dervyn R."/>
            <person name="Bossy R."/>
            <person name="Bolotin A."/>
            <person name="Batto J.-M."/>
            <person name="Walunas T."/>
            <person name="Gibrat J.-F."/>
            <person name="Bessieres P."/>
            <person name="Weissenbach J."/>
            <person name="Ehrlich S.D."/>
            <person name="Maguin E."/>
        </authorList>
    </citation>
    <scope>NUCLEOTIDE SEQUENCE [LARGE SCALE GENOMIC DNA]</scope>
    <source>
        <strain>ATCC 11842 / DSM 20081 / BCRC 10696 / JCM 1002 / NBRC 13953 / NCIMB 11778 / NCTC 12712 / WDCM 00102 / Lb 14</strain>
    </source>
</reference>
<comment type="function">
    <text evidence="1">Plays an essential role in the initiation and regulation of chromosomal replication. ATP-DnaA binds to the origin of replication (oriC) to initiate formation of the DNA replication initiation complex once per cell cycle. Binds the DnaA box (a 9 base pair repeat at the origin) and separates the double-stranded (ds)DNA. Forms a right-handed helical filament on oriC DNA; dsDNA binds to the exterior of the filament while single-stranded (ss)DNA is stabiized in the filament's interior. The ATP-DnaA-oriC complex binds and stabilizes one strand of the AT-rich DNA unwinding element (DUE), permitting loading of DNA polymerase. After initiation quickly degrades to an ADP-DnaA complex that is not apt for DNA replication. Binds acidic phospholipids.</text>
</comment>
<comment type="subunit">
    <text evidence="1">Oligomerizes as a right-handed, spiral filament on DNA at oriC.</text>
</comment>
<comment type="subcellular location">
    <subcellularLocation>
        <location evidence="1">Cytoplasm</location>
    </subcellularLocation>
</comment>
<comment type="domain">
    <text evidence="1">Domain I is involved in oligomerization and binding regulators, domain II is flexibile and of varying length in different bacteria, domain III forms the AAA+ region, while domain IV binds dsDNA.</text>
</comment>
<comment type="similarity">
    <text evidence="1">Belongs to the DnaA family.</text>
</comment>
<accession>Q1GC43</accession>